<protein>
    <recommendedName>
        <fullName evidence="1">Large ribosomal subunit protein uL4</fullName>
    </recommendedName>
    <alternativeName>
        <fullName evidence="3">50S ribosomal protein L4</fullName>
    </alternativeName>
</protein>
<comment type="function">
    <text evidence="1">One of the primary rRNA binding proteins, this protein initially binds near the 5'-end of the 23S rRNA. It is important during the early stages of 50S assembly. It makes multiple contacts with different domains of the 23S rRNA in the assembled 50S subunit and ribosome.</text>
</comment>
<comment type="function">
    <text evidence="1">Forms part of the polypeptide exit tunnel.</text>
</comment>
<comment type="subunit">
    <text evidence="1">Part of the 50S ribosomal subunit.</text>
</comment>
<comment type="similarity">
    <text evidence="1">Belongs to the universal ribosomal protein uL4 family.</text>
</comment>
<feature type="chain" id="PRO_1000142076" description="Large ribosomal subunit protein uL4">
    <location>
        <begin position="1"/>
        <end position="208"/>
    </location>
</feature>
<feature type="region of interest" description="Disordered" evidence="2">
    <location>
        <begin position="45"/>
        <end position="78"/>
    </location>
</feature>
<gene>
    <name evidence="1" type="primary">rplD</name>
    <name type="ordered locus">CFPG_093</name>
</gene>
<evidence type="ECO:0000255" key="1">
    <source>
        <dbReference type="HAMAP-Rule" id="MF_01328"/>
    </source>
</evidence>
<evidence type="ECO:0000256" key="2">
    <source>
        <dbReference type="SAM" id="MobiDB-lite"/>
    </source>
</evidence>
<evidence type="ECO:0000305" key="3"/>
<keyword id="KW-1185">Reference proteome</keyword>
<keyword id="KW-0687">Ribonucleoprotein</keyword>
<keyword id="KW-0689">Ribosomal protein</keyword>
<keyword id="KW-0694">RNA-binding</keyword>
<keyword id="KW-0699">rRNA-binding</keyword>
<name>RL4_AZOPC</name>
<proteinExistence type="inferred from homology"/>
<organism>
    <name type="scientific">Azobacteroides pseudotrichonymphae genomovar. CFP2</name>
    <dbReference type="NCBI Taxonomy" id="511995"/>
    <lineage>
        <taxon>Bacteria</taxon>
        <taxon>Pseudomonadati</taxon>
        <taxon>Bacteroidota</taxon>
        <taxon>Bacteroidia</taxon>
        <taxon>Bacteroidales</taxon>
        <taxon>Candidatus Azobacteroides</taxon>
    </lineage>
</organism>
<sequence length="208" mass="23486">MEVNIFNIKGEETGRKVILEDSVFRVEPNDYIVYLDVRRYLANKRQGTAKSKERSEMSGSTRKLGRQKGSGGARRGDINSPVLVGGARVFGPKPRDYSFKLNKKEKKMARRSVLSCRMREGGVIVVEDFSFETPKTKEFLDLAKNLKIQIANSKLLVILPEKDDNIFLSARNISKVKVTTVSNLNTYEILDVNRLVILESSVVAINNF</sequence>
<dbReference type="EMBL" id="AP010656">
    <property type="protein sequence ID" value="BAG83356.1"/>
    <property type="molecule type" value="Genomic_DNA"/>
</dbReference>
<dbReference type="RefSeq" id="WP_012573117.1">
    <property type="nucleotide sequence ID" value="NC_011565.1"/>
</dbReference>
<dbReference type="SMR" id="B6YQ84"/>
<dbReference type="STRING" id="511995.CFPG_093"/>
<dbReference type="KEGG" id="aps:CFPG_093"/>
<dbReference type="eggNOG" id="COG0088">
    <property type="taxonomic scope" value="Bacteria"/>
</dbReference>
<dbReference type="HOGENOM" id="CLU_041575_5_2_10"/>
<dbReference type="OrthoDB" id="9803201at2"/>
<dbReference type="Proteomes" id="UP000000723">
    <property type="component" value="Chromosome"/>
</dbReference>
<dbReference type="GO" id="GO:1990904">
    <property type="term" value="C:ribonucleoprotein complex"/>
    <property type="evidence" value="ECO:0007669"/>
    <property type="project" value="UniProtKB-KW"/>
</dbReference>
<dbReference type="GO" id="GO:0005840">
    <property type="term" value="C:ribosome"/>
    <property type="evidence" value="ECO:0007669"/>
    <property type="project" value="UniProtKB-KW"/>
</dbReference>
<dbReference type="GO" id="GO:0019843">
    <property type="term" value="F:rRNA binding"/>
    <property type="evidence" value="ECO:0007669"/>
    <property type="project" value="UniProtKB-UniRule"/>
</dbReference>
<dbReference type="GO" id="GO:0003735">
    <property type="term" value="F:structural constituent of ribosome"/>
    <property type="evidence" value="ECO:0007669"/>
    <property type="project" value="InterPro"/>
</dbReference>
<dbReference type="GO" id="GO:0006412">
    <property type="term" value="P:translation"/>
    <property type="evidence" value="ECO:0007669"/>
    <property type="project" value="UniProtKB-UniRule"/>
</dbReference>
<dbReference type="Gene3D" id="3.40.1370.10">
    <property type="match status" value="1"/>
</dbReference>
<dbReference type="HAMAP" id="MF_01328_B">
    <property type="entry name" value="Ribosomal_uL4_B"/>
    <property type="match status" value="1"/>
</dbReference>
<dbReference type="InterPro" id="IPR002136">
    <property type="entry name" value="Ribosomal_uL4"/>
</dbReference>
<dbReference type="InterPro" id="IPR013005">
    <property type="entry name" value="Ribosomal_uL4-like"/>
</dbReference>
<dbReference type="InterPro" id="IPR023574">
    <property type="entry name" value="Ribosomal_uL4_dom_sf"/>
</dbReference>
<dbReference type="NCBIfam" id="TIGR03953">
    <property type="entry name" value="rplD_bact"/>
    <property type="match status" value="1"/>
</dbReference>
<dbReference type="PANTHER" id="PTHR10746">
    <property type="entry name" value="50S RIBOSOMAL PROTEIN L4"/>
    <property type="match status" value="1"/>
</dbReference>
<dbReference type="PANTHER" id="PTHR10746:SF6">
    <property type="entry name" value="LARGE RIBOSOMAL SUBUNIT PROTEIN UL4M"/>
    <property type="match status" value="1"/>
</dbReference>
<dbReference type="Pfam" id="PF00573">
    <property type="entry name" value="Ribosomal_L4"/>
    <property type="match status" value="1"/>
</dbReference>
<dbReference type="SUPFAM" id="SSF52166">
    <property type="entry name" value="Ribosomal protein L4"/>
    <property type="match status" value="1"/>
</dbReference>
<reference key="1">
    <citation type="journal article" date="2008" name="Science">
        <title>Genome of an endosymbiont coupling N2 fixation to cellulolysis within RT protist cells in termite gut.</title>
        <authorList>
            <person name="Hongoh Y."/>
            <person name="Sharma V.K."/>
            <person name="Prakash T."/>
            <person name="Noda S."/>
            <person name="Toh H."/>
            <person name="Taylor T.D."/>
            <person name="Kudo T."/>
            <person name="Sakaki Y."/>
            <person name="Toyoda A."/>
            <person name="Hattori M."/>
            <person name="Ohkuma M."/>
        </authorList>
    </citation>
    <scope>NUCLEOTIDE SEQUENCE [LARGE SCALE GENOMIC DNA]</scope>
</reference>
<accession>B6YQ84</accession>